<organism>
    <name type="scientific">Shewanella frigidimarina (strain NCIMB 400)</name>
    <dbReference type="NCBI Taxonomy" id="318167"/>
    <lineage>
        <taxon>Bacteria</taxon>
        <taxon>Pseudomonadati</taxon>
        <taxon>Pseudomonadota</taxon>
        <taxon>Gammaproteobacteria</taxon>
        <taxon>Alteromonadales</taxon>
        <taxon>Shewanellaceae</taxon>
        <taxon>Shewanella</taxon>
    </lineage>
</organism>
<gene>
    <name evidence="1" type="primary">rhlB</name>
    <name type="ordered locus">Sfri_0461</name>
</gene>
<protein>
    <recommendedName>
        <fullName evidence="1">ATP-dependent RNA helicase RhlB</fullName>
        <ecNumber evidence="1">3.6.4.13</ecNumber>
    </recommendedName>
</protein>
<comment type="function">
    <text evidence="1">DEAD-box RNA helicase involved in RNA degradation. Has RNA-dependent ATPase activity and unwinds double-stranded RNA.</text>
</comment>
<comment type="catalytic activity">
    <reaction evidence="1">
        <text>ATP + H2O = ADP + phosphate + H(+)</text>
        <dbReference type="Rhea" id="RHEA:13065"/>
        <dbReference type="ChEBI" id="CHEBI:15377"/>
        <dbReference type="ChEBI" id="CHEBI:15378"/>
        <dbReference type="ChEBI" id="CHEBI:30616"/>
        <dbReference type="ChEBI" id="CHEBI:43474"/>
        <dbReference type="ChEBI" id="CHEBI:456216"/>
        <dbReference type="EC" id="3.6.4.13"/>
    </reaction>
</comment>
<comment type="subunit">
    <text evidence="1">Component of the RNA degradosome, which is a multiprotein complex involved in RNA processing and mRNA degradation.</text>
</comment>
<comment type="subcellular location">
    <subcellularLocation>
        <location evidence="1">Cytoplasm</location>
    </subcellularLocation>
</comment>
<comment type="similarity">
    <text evidence="1">Belongs to the DEAD box helicase family. RhlB subfamily.</text>
</comment>
<feature type="chain" id="PRO_1000082861" description="ATP-dependent RNA helicase RhlB">
    <location>
        <begin position="1"/>
        <end position="434"/>
    </location>
</feature>
<feature type="domain" description="Helicase ATP-binding" evidence="1">
    <location>
        <begin position="40"/>
        <end position="219"/>
    </location>
</feature>
<feature type="domain" description="Helicase C-terminal" evidence="1">
    <location>
        <begin position="243"/>
        <end position="390"/>
    </location>
</feature>
<feature type="region of interest" description="Disordered" evidence="2">
    <location>
        <begin position="390"/>
        <end position="434"/>
    </location>
</feature>
<feature type="short sequence motif" description="Q motif">
    <location>
        <begin position="9"/>
        <end position="37"/>
    </location>
</feature>
<feature type="short sequence motif" description="DEAD box">
    <location>
        <begin position="165"/>
        <end position="168"/>
    </location>
</feature>
<feature type="binding site" evidence="1">
    <location>
        <begin position="53"/>
        <end position="60"/>
    </location>
    <ligand>
        <name>ATP</name>
        <dbReference type="ChEBI" id="CHEBI:30616"/>
    </ligand>
</feature>
<dbReference type="EC" id="3.6.4.13" evidence="1"/>
<dbReference type="EMBL" id="CP000447">
    <property type="protein sequence ID" value="ABI70323.1"/>
    <property type="molecule type" value="Genomic_DNA"/>
</dbReference>
<dbReference type="RefSeq" id="WP_011635950.1">
    <property type="nucleotide sequence ID" value="NC_008345.1"/>
</dbReference>
<dbReference type="SMR" id="Q088J2"/>
<dbReference type="STRING" id="318167.Sfri_0461"/>
<dbReference type="KEGG" id="sfr:Sfri_0461"/>
<dbReference type="eggNOG" id="COG0513">
    <property type="taxonomic scope" value="Bacteria"/>
</dbReference>
<dbReference type="HOGENOM" id="CLU_003041_28_3_6"/>
<dbReference type="OrthoDB" id="9805696at2"/>
<dbReference type="Proteomes" id="UP000000684">
    <property type="component" value="Chromosome"/>
</dbReference>
<dbReference type="GO" id="GO:0005829">
    <property type="term" value="C:cytosol"/>
    <property type="evidence" value="ECO:0007669"/>
    <property type="project" value="TreeGrafter"/>
</dbReference>
<dbReference type="GO" id="GO:0005524">
    <property type="term" value="F:ATP binding"/>
    <property type="evidence" value="ECO:0007669"/>
    <property type="project" value="UniProtKB-UniRule"/>
</dbReference>
<dbReference type="GO" id="GO:0016887">
    <property type="term" value="F:ATP hydrolysis activity"/>
    <property type="evidence" value="ECO:0007669"/>
    <property type="project" value="RHEA"/>
</dbReference>
<dbReference type="GO" id="GO:0003723">
    <property type="term" value="F:RNA binding"/>
    <property type="evidence" value="ECO:0007669"/>
    <property type="project" value="UniProtKB-UniRule"/>
</dbReference>
<dbReference type="GO" id="GO:0003724">
    <property type="term" value="F:RNA helicase activity"/>
    <property type="evidence" value="ECO:0007669"/>
    <property type="project" value="UniProtKB-UniRule"/>
</dbReference>
<dbReference type="GO" id="GO:0006401">
    <property type="term" value="P:RNA catabolic process"/>
    <property type="evidence" value="ECO:0007669"/>
    <property type="project" value="UniProtKB-UniRule"/>
</dbReference>
<dbReference type="CDD" id="cd00268">
    <property type="entry name" value="DEADc"/>
    <property type="match status" value="1"/>
</dbReference>
<dbReference type="CDD" id="cd18787">
    <property type="entry name" value="SF2_C_DEAD"/>
    <property type="match status" value="1"/>
</dbReference>
<dbReference type="FunFam" id="3.40.50.300:FF:000312">
    <property type="entry name" value="ATP-dependent RNA helicase RhlB"/>
    <property type="match status" value="1"/>
</dbReference>
<dbReference type="Gene3D" id="3.40.50.300">
    <property type="entry name" value="P-loop containing nucleotide triphosphate hydrolases"/>
    <property type="match status" value="2"/>
</dbReference>
<dbReference type="HAMAP" id="MF_00661">
    <property type="entry name" value="DEAD_helicase_RhlB"/>
    <property type="match status" value="1"/>
</dbReference>
<dbReference type="InterPro" id="IPR011545">
    <property type="entry name" value="DEAD/DEAH_box_helicase_dom"/>
</dbReference>
<dbReference type="InterPro" id="IPR050079">
    <property type="entry name" value="DEAD_box_RNA_helicase"/>
</dbReference>
<dbReference type="InterPro" id="IPR014001">
    <property type="entry name" value="Helicase_ATP-bd"/>
</dbReference>
<dbReference type="InterPro" id="IPR001650">
    <property type="entry name" value="Helicase_C-like"/>
</dbReference>
<dbReference type="InterPro" id="IPR027417">
    <property type="entry name" value="P-loop_NTPase"/>
</dbReference>
<dbReference type="InterPro" id="IPR000629">
    <property type="entry name" value="RNA-helicase_DEAD-box_CS"/>
</dbReference>
<dbReference type="InterPro" id="IPR023554">
    <property type="entry name" value="RNA_helicase_ATP-dep_RhlB"/>
</dbReference>
<dbReference type="InterPro" id="IPR014014">
    <property type="entry name" value="RNA_helicase_DEAD_Q_motif"/>
</dbReference>
<dbReference type="NCBIfam" id="NF003419">
    <property type="entry name" value="PRK04837.1"/>
    <property type="match status" value="1"/>
</dbReference>
<dbReference type="PANTHER" id="PTHR47959:SF10">
    <property type="entry name" value="ATP-DEPENDENT RNA HELICASE RHLB"/>
    <property type="match status" value="1"/>
</dbReference>
<dbReference type="PANTHER" id="PTHR47959">
    <property type="entry name" value="ATP-DEPENDENT RNA HELICASE RHLE-RELATED"/>
    <property type="match status" value="1"/>
</dbReference>
<dbReference type="Pfam" id="PF00270">
    <property type="entry name" value="DEAD"/>
    <property type="match status" value="1"/>
</dbReference>
<dbReference type="Pfam" id="PF00271">
    <property type="entry name" value="Helicase_C"/>
    <property type="match status" value="1"/>
</dbReference>
<dbReference type="SMART" id="SM00487">
    <property type="entry name" value="DEXDc"/>
    <property type="match status" value="1"/>
</dbReference>
<dbReference type="SMART" id="SM00490">
    <property type="entry name" value="HELICc"/>
    <property type="match status" value="1"/>
</dbReference>
<dbReference type="SUPFAM" id="SSF52540">
    <property type="entry name" value="P-loop containing nucleoside triphosphate hydrolases"/>
    <property type="match status" value="1"/>
</dbReference>
<dbReference type="PROSITE" id="PS00039">
    <property type="entry name" value="DEAD_ATP_HELICASE"/>
    <property type="match status" value="1"/>
</dbReference>
<dbReference type="PROSITE" id="PS51192">
    <property type="entry name" value="HELICASE_ATP_BIND_1"/>
    <property type="match status" value="1"/>
</dbReference>
<dbReference type="PROSITE" id="PS51194">
    <property type="entry name" value="HELICASE_CTER"/>
    <property type="match status" value="1"/>
</dbReference>
<dbReference type="PROSITE" id="PS51195">
    <property type="entry name" value="Q_MOTIF"/>
    <property type="match status" value="1"/>
</dbReference>
<keyword id="KW-0067">ATP-binding</keyword>
<keyword id="KW-0963">Cytoplasm</keyword>
<keyword id="KW-0347">Helicase</keyword>
<keyword id="KW-0378">Hydrolase</keyword>
<keyword id="KW-0547">Nucleotide-binding</keyword>
<keyword id="KW-1185">Reference proteome</keyword>
<keyword id="KW-0694">RNA-binding</keyword>
<proteinExistence type="inferred from homology"/>
<accession>Q088J2</accession>
<reference key="1">
    <citation type="submission" date="2006-08" db="EMBL/GenBank/DDBJ databases">
        <title>Complete sequence of Shewanella frigidimarina NCIMB 400.</title>
        <authorList>
            <consortium name="US DOE Joint Genome Institute"/>
            <person name="Copeland A."/>
            <person name="Lucas S."/>
            <person name="Lapidus A."/>
            <person name="Barry K."/>
            <person name="Detter J.C."/>
            <person name="Glavina del Rio T."/>
            <person name="Hammon N."/>
            <person name="Israni S."/>
            <person name="Dalin E."/>
            <person name="Tice H."/>
            <person name="Pitluck S."/>
            <person name="Fredrickson J.K."/>
            <person name="Kolker E."/>
            <person name="McCuel L.A."/>
            <person name="DiChristina T."/>
            <person name="Nealson K.H."/>
            <person name="Newman D."/>
            <person name="Tiedje J.M."/>
            <person name="Zhou J."/>
            <person name="Romine M.F."/>
            <person name="Culley D.E."/>
            <person name="Serres M."/>
            <person name="Chertkov O."/>
            <person name="Brettin T."/>
            <person name="Bruce D."/>
            <person name="Han C."/>
            <person name="Tapia R."/>
            <person name="Gilna P."/>
            <person name="Schmutz J."/>
            <person name="Larimer F."/>
            <person name="Land M."/>
            <person name="Hauser L."/>
            <person name="Kyrpides N."/>
            <person name="Mikhailova N."/>
            <person name="Richardson P."/>
        </authorList>
    </citation>
    <scope>NUCLEOTIDE SEQUENCE [LARGE SCALE GENOMIC DNA]</scope>
    <source>
        <strain>NCIMB 400</strain>
    </source>
</reference>
<name>RHLB_SHEFN</name>
<sequence length="434" mass="48469">MSQTHLSTKKFADFPLKPEILAALNENGFEFCTPIQALSLPILLNAKDIAGQAQTGTGKTMAFLVATFNHLLNVAAPESRKATEPRAIIMAPTRELAIQIAKDAKLLAAHTGLKVGIVYGGESYETQRAVLDKGVDILIGTTGRIIDYVRQGVISLSHIQAVVLDEADRMFDLGFIKDIRFLFRRMPDAKSRLNMLFSATLSMKVQELAYDHMNDPEKVEIEPLEKTSKNIKEEIFYPSMEDKMRLLLSLIEEDWPDKAIVFSNTKHSCEKLWSYLEGDGHRVGLLTGDVPQKKRIRILEQFTSGEIDVLVATDVAARGLHISDVSHVYNYDLPDDCEDYVHRIGRTGRAGQKGISISFACEEYALNLPEIETYINHSIPVSNYDKDALLDDIPPPARIHRKPPTSRTRDGGSKGAHRSGGNTSRPPRHRTRRP</sequence>
<evidence type="ECO:0000255" key="1">
    <source>
        <dbReference type="HAMAP-Rule" id="MF_00661"/>
    </source>
</evidence>
<evidence type="ECO:0000256" key="2">
    <source>
        <dbReference type="SAM" id="MobiDB-lite"/>
    </source>
</evidence>